<gene>
    <name evidence="1" type="primary">murB</name>
    <name type="ordered locus">CTLon_0203</name>
</gene>
<proteinExistence type="inferred from homology"/>
<comment type="function">
    <text evidence="1">Cell wall formation.</text>
</comment>
<comment type="catalytic activity">
    <reaction evidence="1">
        <text>UDP-N-acetyl-alpha-D-muramate + NADP(+) = UDP-N-acetyl-3-O-(1-carboxyvinyl)-alpha-D-glucosamine + NADPH + H(+)</text>
        <dbReference type="Rhea" id="RHEA:12248"/>
        <dbReference type="ChEBI" id="CHEBI:15378"/>
        <dbReference type="ChEBI" id="CHEBI:57783"/>
        <dbReference type="ChEBI" id="CHEBI:58349"/>
        <dbReference type="ChEBI" id="CHEBI:68483"/>
        <dbReference type="ChEBI" id="CHEBI:70757"/>
        <dbReference type="EC" id="1.3.1.98"/>
    </reaction>
</comment>
<comment type="cofactor">
    <cofactor evidence="1">
        <name>FAD</name>
        <dbReference type="ChEBI" id="CHEBI:57692"/>
    </cofactor>
</comment>
<comment type="pathway">
    <text evidence="1">Cell wall biogenesis; peptidoglycan biosynthesis.</text>
</comment>
<comment type="subcellular location">
    <subcellularLocation>
        <location evidence="1">Cytoplasm</location>
    </subcellularLocation>
</comment>
<comment type="similarity">
    <text evidence="1">Belongs to the MurB family.</text>
</comment>
<feature type="chain" id="PRO_1000191409" description="UDP-N-acetylenolpyruvoylglucosamine reductase">
    <location>
        <begin position="1"/>
        <end position="291"/>
    </location>
</feature>
<feature type="domain" description="FAD-binding PCMH-type" evidence="1">
    <location>
        <begin position="22"/>
        <end position="187"/>
    </location>
</feature>
<feature type="active site" evidence="1">
    <location>
        <position position="166"/>
    </location>
</feature>
<feature type="active site" description="Proton donor" evidence="1">
    <location>
        <position position="214"/>
    </location>
</feature>
<feature type="active site" evidence="1">
    <location>
        <position position="283"/>
    </location>
</feature>
<name>MURB_CHLTB</name>
<reference key="1">
    <citation type="journal article" date="2008" name="Genome Res.">
        <title>Chlamydia trachomatis: genome sequence analysis of lymphogranuloma venereum isolates.</title>
        <authorList>
            <person name="Thomson N.R."/>
            <person name="Holden M.T.G."/>
            <person name="Carder C."/>
            <person name="Lennard N."/>
            <person name="Lockey S.J."/>
            <person name="Marsh P."/>
            <person name="Skipp P."/>
            <person name="O'Connor C.D."/>
            <person name="Goodhead I."/>
            <person name="Norbertzcak H."/>
            <person name="Harris B."/>
            <person name="Ormond D."/>
            <person name="Rance R."/>
            <person name="Quail M.A."/>
            <person name="Parkhill J."/>
            <person name="Stephens R.S."/>
            <person name="Clarke I.N."/>
        </authorList>
    </citation>
    <scope>NUCLEOTIDE SEQUENCE [LARGE SCALE GENOMIC DNA]</scope>
    <source>
        <strain>UCH-1/proctitis</strain>
    </source>
</reference>
<organism>
    <name type="scientific">Chlamydia trachomatis serovar L2b (strain UCH-1/proctitis)</name>
    <dbReference type="NCBI Taxonomy" id="471473"/>
    <lineage>
        <taxon>Bacteria</taxon>
        <taxon>Pseudomonadati</taxon>
        <taxon>Chlamydiota</taxon>
        <taxon>Chlamydiia</taxon>
        <taxon>Chlamydiales</taxon>
        <taxon>Chlamydiaceae</taxon>
        <taxon>Chlamydia/Chlamydophila group</taxon>
        <taxon>Chlamydia</taxon>
    </lineage>
</organism>
<protein>
    <recommendedName>
        <fullName evidence="1">UDP-N-acetylenolpyruvoylglucosamine reductase</fullName>
        <ecNumber evidence="1">1.3.1.98</ecNumber>
    </recommendedName>
    <alternativeName>
        <fullName evidence="1">UDP-N-acetylmuramate dehydrogenase</fullName>
    </alternativeName>
</protein>
<accession>B0BAT9</accession>
<evidence type="ECO:0000255" key="1">
    <source>
        <dbReference type="HAMAP-Rule" id="MF_00037"/>
    </source>
</evidence>
<sequence>MTDSFPFSVQESVPLSRFSTFRIGGPARYFKELTSLSEALTVFSYLHTHPLPYIIIGKGSNCLFDDQGFDGLVLYNNIQGQEFLSDTQIKVLSGSSFALLGKRLSSQGFSGLEFAVGIPGTVGGAVFMNAGTTLANTASSLINVEIIDHSGILLSIPREKLLFSYRTSPFQKKPAFIASATFQLTKDPQAAKRAKALIEERILKQPYEYPSAGCIFRNPEGLSAGALIDRAGLKGLKIGGGQISEKHGNFIINTGNACTADILELIEIIQKTLKKQGISLHKEVRIIPFRL</sequence>
<keyword id="KW-0131">Cell cycle</keyword>
<keyword id="KW-0132">Cell division</keyword>
<keyword id="KW-0133">Cell shape</keyword>
<keyword id="KW-0961">Cell wall biogenesis/degradation</keyword>
<keyword id="KW-0963">Cytoplasm</keyword>
<keyword id="KW-0274">FAD</keyword>
<keyword id="KW-0285">Flavoprotein</keyword>
<keyword id="KW-0521">NADP</keyword>
<keyword id="KW-0560">Oxidoreductase</keyword>
<keyword id="KW-0573">Peptidoglycan synthesis</keyword>
<dbReference type="EC" id="1.3.1.98" evidence="1"/>
<dbReference type="EMBL" id="AM884177">
    <property type="protein sequence ID" value="CAP06601.1"/>
    <property type="molecule type" value="Genomic_DNA"/>
</dbReference>
<dbReference type="RefSeq" id="WP_009873442.1">
    <property type="nucleotide sequence ID" value="NC_010280.2"/>
</dbReference>
<dbReference type="SMR" id="B0BAT9"/>
<dbReference type="KEGG" id="ctl:CTLon_0203"/>
<dbReference type="HOGENOM" id="CLU_035304_1_1_0"/>
<dbReference type="UniPathway" id="UPA00219"/>
<dbReference type="Proteomes" id="UP001154401">
    <property type="component" value="Chromosome"/>
</dbReference>
<dbReference type="GO" id="GO:0005829">
    <property type="term" value="C:cytosol"/>
    <property type="evidence" value="ECO:0007669"/>
    <property type="project" value="TreeGrafter"/>
</dbReference>
<dbReference type="GO" id="GO:0071949">
    <property type="term" value="F:FAD binding"/>
    <property type="evidence" value="ECO:0007669"/>
    <property type="project" value="InterPro"/>
</dbReference>
<dbReference type="GO" id="GO:0008762">
    <property type="term" value="F:UDP-N-acetylmuramate dehydrogenase activity"/>
    <property type="evidence" value="ECO:0007669"/>
    <property type="project" value="UniProtKB-UniRule"/>
</dbReference>
<dbReference type="GO" id="GO:0051301">
    <property type="term" value="P:cell division"/>
    <property type="evidence" value="ECO:0007669"/>
    <property type="project" value="UniProtKB-KW"/>
</dbReference>
<dbReference type="GO" id="GO:0071555">
    <property type="term" value="P:cell wall organization"/>
    <property type="evidence" value="ECO:0007669"/>
    <property type="project" value="UniProtKB-KW"/>
</dbReference>
<dbReference type="GO" id="GO:0009252">
    <property type="term" value="P:peptidoglycan biosynthetic process"/>
    <property type="evidence" value="ECO:0007669"/>
    <property type="project" value="UniProtKB-UniRule"/>
</dbReference>
<dbReference type="GO" id="GO:0008360">
    <property type="term" value="P:regulation of cell shape"/>
    <property type="evidence" value="ECO:0007669"/>
    <property type="project" value="UniProtKB-KW"/>
</dbReference>
<dbReference type="Gene3D" id="3.30.465.10">
    <property type="match status" value="1"/>
</dbReference>
<dbReference type="Gene3D" id="3.90.78.10">
    <property type="entry name" value="UDP-N-acetylenolpyruvoylglucosamine reductase, C-terminal domain"/>
    <property type="match status" value="1"/>
</dbReference>
<dbReference type="Gene3D" id="3.30.43.10">
    <property type="entry name" value="Uridine Diphospho-n-acetylenolpyruvylglucosamine Reductase, domain 2"/>
    <property type="match status" value="1"/>
</dbReference>
<dbReference type="HAMAP" id="MF_00037">
    <property type="entry name" value="MurB"/>
    <property type="match status" value="1"/>
</dbReference>
<dbReference type="InterPro" id="IPR016166">
    <property type="entry name" value="FAD-bd_PCMH"/>
</dbReference>
<dbReference type="InterPro" id="IPR036318">
    <property type="entry name" value="FAD-bd_PCMH-like_sf"/>
</dbReference>
<dbReference type="InterPro" id="IPR016167">
    <property type="entry name" value="FAD-bd_PCMH_sub1"/>
</dbReference>
<dbReference type="InterPro" id="IPR016169">
    <property type="entry name" value="FAD-bd_PCMH_sub2"/>
</dbReference>
<dbReference type="InterPro" id="IPR003170">
    <property type="entry name" value="MurB"/>
</dbReference>
<dbReference type="InterPro" id="IPR011601">
    <property type="entry name" value="MurB_C"/>
</dbReference>
<dbReference type="InterPro" id="IPR036635">
    <property type="entry name" value="MurB_C_sf"/>
</dbReference>
<dbReference type="InterPro" id="IPR006094">
    <property type="entry name" value="Oxid_FAD_bind_N"/>
</dbReference>
<dbReference type="NCBIfam" id="TIGR00179">
    <property type="entry name" value="murB"/>
    <property type="match status" value="1"/>
</dbReference>
<dbReference type="NCBIfam" id="NF010480">
    <property type="entry name" value="PRK13905.1"/>
    <property type="match status" value="1"/>
</dbReference>
<dbReference type="PANTHER" id="PTHR21071">
    <property type="entry name" value="UDP-N-ACETYLENOLPYRUVOYLGLUCOSAMINE REDUCTASE"/>
    <property type="match status" value="1"/>
</dbReference>
<dbReference type="PANTHER" id="PTHR21071:SF4">
    <property type="entry name" value="UDP-N-ACETYLENOLPYRUVOYLGLUCOSAMINE REDUCTASE"/>
    <property type="match status" value="1"/>
</dbReference>
<dbReference type="Pfam" id="PF01565">
    <property type="entry name" value="FAD_binding_4"/>
    <property type="match status" value="1"/>
</dbReference>
<dbReference type="Pfam" id="PF02873">
    <property type="entry name" value="MurB_C"/>
    <property type="match status" value="1"/>
</dbReference>
<dbReference type="SUPFAM" id="SSF56176">
    <property type="entry name" value="FAD-binding/transporter-associated domain-like"/>
    <property type="match status" value="1"/>
</dbReference>
<dbReference type="SUPFAM" id="SSF56194">
    <property type="entry name" value="Uridine diphospho-N-Acetylenolpyruvylglucosamine reductase, MurB, C-terminal domain"/>
    <property type="match status" value="1"/>
</dbReference>
<dbReference type="PROSITE" id="PS51387">
    <property type="entry name" value="FAD_PCMH"/>
    <property type="match status" value="1"/>
</dbReference>